<reference key="1">
    <citation type="journal article" date="2004" name="Nucleic Acids Res.">
        <title>Unique features revealed by the genome sequence of Acinetobacter sp. ADP1, a versatile and naturally transformation competent bacterium.</title>
        <authorList>
            <person name="Barbe V."/>
            <person name="Vallenet D."/>
            <person name="Fonknechten N."/>
            <person name="Kreimeyer A."/>
            <person name="Oztas S."/>
            <person name="Labarre L."/>
            <person name="Cruveiller S."/>
            <person name="Robert C."/>
            <person name="Duprat S."/>
            <person name="Wincker P."/>
            <person name="Ornston L.N."/>
            <person name="Weissenbach J."/>
            <person name="Marliere P."/>
            <person name="Cohen G.N."/>
            <person name="Medigue C."/>
        </authorList>
    </citation>
    <scope>NUCLEOTIDE SEQUENCE [LARGE SCALE GENOMIC DNA]</scope>
    <source>
        <strain>ATCC 33305 / BD413 / ADP1</strain>
    </source>
</reference>
<protein>
    <recommendedName>
        <fullName evidence="1">Ribonuclease 3</fullName>
        <ecNumber evidence="1">3.1.26.3</ecNumber>
    </recommendedName>
    <alternativeName>
        <fullName evidence="1">Ribonuclease III</fullName>
        <shortName evidence="1">RNase III</shortName>
    </alternativeName>
</protein>
<keyword id="KW-0963">Cytoplasm</keyword>
<keyword id="KW-0255">Endonuclease</keyword>
<keyword id="KW-0378">Hydrolase</keyword>
<keyword id="KW-0460">Magnesium</keyword>
<keyword id="KW-0479">Metal-binding</keyword>
<keyword id="KW-0507">mRNA processing</keyword>
<keyword id="KW-0540">Nuclease</keyword>
<keyword id="KW-0694">RNA-binding</keyword>
<keyword id="KW-0698">rRNA processing</keyword>
<keyword id="KW-0699">rRNA-binding</keyword>
<keyword id="KW-0819">tRNA processing</keyword>
<gene>
    <name evidence="1" type="primary">rnc</name>
    <name type="ordered locus">ACIAD2581</name>
</gene>
<comment type="function">
    <text evidence="1">Digests double-stranded RNA. Involved in the processing of primary rRNA transcript to yield the immediate precursors to the large and small rRNAs (23S and 16S). Processes some mRNAs, and tRNAs when they are encoded in the rRNA operon. Processes pre-crRNA and tracrRNA of type II CRISPR loci if present in the organism.</text>
</comment>
<comment type="catalytic activity">
    <reaction evidence="1">
        <text>Endonucleolytic cleavage to 5'-phosphomonoester.</text>
        <dbReference type="EC" id="3.1.26.3"/>
    </reaction>
</comment>
<comment type="cofactor">
    <cofactor evidence="1">
        <name>Mg(2+)</name>
        <dbReference type="ChEBI" id="CHEBI:18420"/>
    </cofactor>
</comment>
<comment type="subunit">
    <text evidence="1">Homodimer.</text>
</comment>
<comment type="subcellular location">
    <subcellularLocation>
        <location evidence="1">Cytoplasm</location>
    </subcellularLocation>
</comment>
<comment type="similarity">
    <text evidence="1">Belongs to the ribonuclease III family.</text>
</comment>
<sequence length="230" mass="26270">MIKTQSKLSDPRLQSRIGYEFKQLELLQLALTHRSVSHKYNYERLEFLGDSLLGMIIANYLYQAYPHENEGRLTRMRATLVRQEALGKIANDLKLSRCLILSTGELKSGGHHRESILADTVEAIIGAIYVDSNDLNLLKNIVLKWYIPYLDHIEPTDQLKDPKSRLQEYLQARKKPLPVYEVVDIQGDAPNQHFKVVCLVEGLPRVMGEGSSRRFAEQTAAAEILKLLEQ</sequence>
<organism>
    <name type="scientific">Acinetobacter baylyi (strain ATCC 33305 / BD413 / ADP1)</name>
    <dbReference type="NCBI Taxonomy" id="62977"/>
    <lineage>
        <taxon>Bacteria</taxon>
        <taxon>Pseudomonadati</taxon>
        <taxon>Pseudomonadota</taxon>
        <taxon>Gammaproteobacteria</taxon>
        <taxon>Moraxellales</taxon>
        <taxon>Moraxellaceae</taxon>
        <taxon>Acinetobacter</taxon>
    </lineage>
</organism>
<accession>Q6F9C2</accession>
<evidence type="ECO:0000255" key="1">
    <source>
        <dbReference type="HAMAP-Rule" id="MF_00104"/>
    </source>
</evidence>
<proteinExistence type="inferred from homology"/>
<dbReference type="EC" id="3.1.26.3" evidence="1"/>
<dbReference type="EMBL" id="CR543861">
    <property type="protein sequence ID" value="CAG69343.1"/>
    <property type="molecule type" value="Genomic_DNA"/>
</dbReference>
<dbReference type="RefSeq" id="WP_004928722.1">
    <property type="nucleotide sequence ID" value="NC_005966.1"/>
</dbReference>
<dbReference type="SMR" id="Q6F9C2"/>
<dbReference type="STRING" id="202950.GCA_001485005_01437"/>
<dbReference type="GeneID" id="45234864"/>
<dbReference type="KEGG" id="aci:ACIAD2581"/>
<dbReference type="eggNOG" id="COG0571">
    <property type="taxonomic scope" value="Bacteria"/>
</dbReference>
<dbReference type="HOGENOM" id="CLU_000907_1_1_6"/>
<dbReference type="OrthoDB" id="9805026at2"/>
<dbReference type="BioCyc" id="ASP62977:ACIAD_RS11735-MONOMER"/>
<dbReference type="Proteomes" id="UP000000430">
    <property type="component" value="Chromosome"/>
</dbReference>
<dbReference type="GO" id="GO:0005737">
    <property type="term" value="C:cytoplasm"/>
    <property type="evidence" value="ECO:0007669"/>
    <property type="project" value="UniProtKB-SubCell"/>
</dbReference>
<dbReference type="GO" id="GO:0046872">
    <property type="term" value="F:metal ion binding"/>
    <property type="evidence" value="ECO:0007669"/>
    <property type="project" value="UniProtKB-KW"/>
</dbReference>
<dbReference type="GO" id="GO:0004525">
    <property type="term" value="F:ribonuclease III activity"/>
    <property type="evidence" value="ECO:0007669"/>
    <property type="project" value="UniProtKB-UniRule"/>
</dbReference>
<dbReference type="GO" id="GO:0019843">
    <property type="term" value="F:rRNA binding"/>
    <property type="evidence" value="ECO:0007669"/>
    <property type="project" value="UniProtKB-KW"/>
</dbReference>
<dbReference type="GO" id="GO:0006397">
    <property type="term" value="P:mRNA processing"/>
    <property type="evidence" value="ECO:0007669"/>
    <property type="project" value="UniProtKB-UniRule"/>
</dbReference>
<dbReference type="GO" id="GO:0006364">
    <property type="term" value="P:rRNA processing"/>
    <property type="evidence" value="ECO:0007669"/>
    <property type="project" value="UniProtKB-UniRule"/>
</dbReference>
<dbReference type="GO" id="GO:0008033">
    <property type="term" value="P:tRNA processing"/>
    <property type="evidence" value="ECO:0007669"/>
    <property type="project" value="UniProtKB-KW"/>
</dbReference>
<dbReference type="CDD" id="cd10845">
    <property type="entry name" value="DSRM_RNAse_III_family"/>
    <property type="match status" value="1"/>
</dbReference>
<dbReference type="CDD" id="cd00593">
    <property type="entry name" value="RIBOc"/>
    <property type="match status" value="1"/>
</dbReference>
<dbReference type="FunFam" id="1.10.1520.10:FF:000001">
    <property type="entry name" value="Ribonuclease 3"/>
    <property type="match status" value="1"/>
</dbReference>
<dbReference type="FunFam" id="3.30.160.20:FF:000003">
    <property type="entry name" value="Ribonuclease 3"/>
    <property type="match status" value="1"/>
</dbReference>
<dbReference type="Gene3D" id="3.30.160.20">
    <property type="match status" value="1"/>
</dbReference>
<dbReference type="Gene3D" id="1.10.1520.10">
    <property type="entry name" value="Ribonuclease III domain"/>
    <property type="match status" value="1"/>
</dbReference>
<dbReference type="HAMAP" id="MF_00104">
    <property type="entry name" value="RNase_III"/>
    <property type="match status" value="1"/>
</dbReference>
<dbReference type="InterPro" id="IPR014720">
    <property type="entry name" value="dsRBD_dom"/>
</dbReference>
<dbReference type="InterPro" id="IPR011907">
    <property type="entry name" value="RNase_III"/>
</dbReference>
<dbReference type="InterPro" id="IPR000999">
    <property type="entry name" value="RNase_III_dom"/>
</dbReference>
<dbReference type="InterPro" id="IPR036389">
    <property type="entry name" value="RNase_III_sf"/>
</dbReference>
<dbReference type="NCBIfam" id="TIGR02191">
    <property type="entry name" value="RNaseIII"/>
    <property type="match status" value="1"/>
</dbReference>
<dbReference type="PANTHER" id="PTHR14950">
    <property type="entry name" value="DICER-RELATED"/>
    <property type="match status" value="1"/>
</dbReference>
<dbReference type="PANTHER" id="PTHR14950:SF37">
    <property type="entry name" value="ENDORIBONUCLEASE DICER"/>
    <property type="match status" value="1"/>
</dbReference>
<dbReference type="Pfam" id="PF00035">
    <property type="entry name" value="dsrm"/>
    <property type="match status" value="1"/>
</dbReference>
<dbReference type="Pfam" id="PF14622">
    <property type="entry name" value="Ribonucleas_3_3"/>
    <property type="match status" value="1"/>
</dbReference>
<dbReference type="SMART" id="SM00358">
    <property type="entry name" value="DSRM"/>
    <property type="match status" value="1"/>
</dbReference>
<dbReference type="SMART" id="SM00535">
    <property type="entry name" value="RIBOc"/>
    <property type="match status" value="1"/>
</dbReference>
<dbReference type="SUPFAM" id="SSF54768">
    <property type="entry name" value="dsRNA-binding domain-like"/>
    <property type="match status" value="1"/>
</dbReference>
<dbReference type="SUPFAM" id="SSF69065">
    <property type="entry name" value="RNase III domain-like"/>
    <property type="match status" value="1"/>
</dbReference>
<dbReference type="PROSITE" id="PS50137">
    <property type="entry name" value="DS_RBD"/>
    <property type="match status" value="1"/>
</dbReference>
<dbReference type="PROSITE" id="PS00517">
    <property type="entry name" value="RNASE_3_1"/>
    <property type="match status" value="1"/>
</dbReference>
<dbReference type="PROSITE" id="PS50142">
    <property type="entry name" value="RNASE_3_2"/>
    <property type="match status" value="1"/>
</dbReference>
<name>RNC_ACIAD</name>
<feature type="chain" id="PRO_0000228488" description="Ribonuclease 3">
    <location>
        <begin position="1"/>
        <end position="230"/>
    </location>
</feature>
<feature type="domain" description="RNase III" evidence="1">
    <location>
        <begin position="10"/>
        <end position="133"/>
    </location>
</feature>
<feature type="domain" description="DRBM" evidence="1">
    <location>
        <begin position="161"/>
        <end position="230"/>
    </location>
</feature>
<feature type="active site" evidence="1">
    <location>
        <position position="50"/>
    </location>
</feature>
<feature type="active site" evidence="1">
    <location>
        <position position="122"/>
    </location>
</feature>
<feature type="binding site" evidence="1">
    <location>
        <position position="46"/>
    </location>
    <ligand>
        <name>Mg(2+)</name>
        <dbReference type="ChEBI" id="CHEBI:18420"/>
    </ligand>
</feature>
<feature type="binding site" evidence="1">
    <location>
        <position position="119"/>
    </location>
    <ligand>
        <name>Mg(2+)</name>
        <dbReference type="ChEBI" id="CHEBI:18420"/>
    </ligand>
</feature>
<feature type="binding site" evidence="1">
    <location>
        <position position="122"/>
    </location>
    <ligand>
        <name>Mg(2+)</name>
        <dbReference type="ChEBI" id="CHEBI:18420"/>
    </ligand>
</feature>